<accession>Q679B6</accession>
<geneLocation type="mitochondrion"/>
<organism>
    <name type="scientific">Leptonychotes weddellii</name>
    <name type="common">Weddell seal</name>
    <name type="synonym">Otaria weddellii</name>
    <dbReference type="NCBI Taxonomy" id="9713"/>
    <lineage>
        <taxon>Eukaryota</taxon>
        <taxon>Metazoa</taxon>
        <taxon>Chordata</taxon>
        <taxon>Craniata</taxon>
        <taxon>Vertebrata</taxon>
        <taxon>Euteleostomi</taxon>
        <taxon>Mammalia</taxon>
        <taxon>Eutheria</taxon>
        <taxon>Laurasiatheria</taxon>
        <taxon>Carnivora</taxon>
        <taxon>Caniformia</taxon>
        <taxon>Pinnipedia</taxon>
        <taxon>Phocidae</taxon>
        <taxon>Monachinae</taxon>
        <taxon>Lobodontini</taxon>
        <taxon>Leptonychotes</taxon>
    </lineage>
</organism>
<dbReference type="EC" id="7.1.1.2"/>
<dbReference type="EMBL" id="AY377228">
    <property type="protein sequence ID" value="AAQ93767.1"/>
    <property type="molecule type" value="Genomic_DNA"/>
</dbReference>
<dbReference type="EMBL" id="AY377229">
    <property type="protein sequence ID" value="AAQ93768.1"/>
    <property type="molecule type" value="Genomic_DNA"/>
</dbReference>
<dbReference type="EMBL" id="AM181025">
    <property type="protein sequence ID" value="CAJ56996.1"/>
    <property type="molecule type" value="Genomic_DNA"/>
</dbReference>
<dbReference type="RefSeq" id="YP_778807.1">
    <property type="nucleotide sequence ID" value="NC_008424.1"/>
</dbReference>
<dbReference type="SMR" id="Q679B6"/>
<dbReference type="GeneID" id="4355836"/>
<dbReference type="KEGG" id="lww:4355836"/>
<dbReference type="CTD" id="4539"/>
<dbReference type="OrthoDB" id="6146597at2759"/>
<dbReference type="Proteomes" id="UP000245341">
    <property type="component" value="Mitochondrion MT"/>
</dbReference>
<dbReference type="GO" id="GO:0005743">
    <property type="term" value="C:mitochondrial inner membrane"/>
    <property type="evidence" value="ECO:0000250"/>
    <property type="project" value="UniProtKB"/>
</dbReference>
<dbReference type="GO" id="GO:0045271">
    <property type="term" value="C:respiratory chain complex I"/>
    <property type="evidence" value="ECO:0000250"/>
    <property type="project" value="UniProtKB"/>
</dbReference>
<dbReference type="GO" id="GO:0008137">
    <property type="term" value="F:NADH dehydrogenase (ubiquinone) activity"/>
    <property type="evidence" value="ECO:0000250"/>
    <property type="project" value="UniProtKB"/>
</dbReference>
<dbReference type="GO" id="GO:0042773">
    <property type="term" value="P:ATP synthesis coupled electron transport"/>
    <property type="evidence" value="ECO:0007669"/>
    <property type="project" value="InterPro"/>
</dbReference>
<dbReference type="FunFam" id="1.10.287.3510:FF:000002">
    <property type="entry name" value="NADH-ubiquinone oxidoreductase chain 4L"/>
    <property type="match status" value="1"/>
</dbReference>
<dbReference type="Gene3D" id="1.10.287.3510">
    <property type="match status" value="1"/>
</dbReference>
<dbReference type="InterPro" id="IPR001133">
    <property type="entry name" value="NADH_UbQ_OxRdtase_chain4L/K"/>
</dbReference>
<dbReference type="InterPro" id="IPR039428">
    <property type="entry name" value="NUOK/Mnh_C1-like"/>
</dbReference>
<dbReference type="PANTHER" id="PTHR11434:SF0">
    <property type="entry name" value="NADH-UBIQUINONE OXIDOREDUCTASE CHAIN 4L"/>
    <property type="match status" value="1"/>
</dbReference>
<dbReference type="PANTHER" id="PTHR11434">
    <property type="entry name" value="NADH-UBIQUINONE OXIDOREDUCTASE SUBUNIT ND4L"/>
    <property type="match status" value="1"/>
</dbReference>
<dbReference type="Pfam" id="PF00420">
    <property type="entry name" value="Oxidored_q2"/>
    <property type="match status" value="1"/>
</dbReference>
<reference key="1">
    <citation type="journal article" date="2004" name="Mol. Phylogenet. Evol.">
        <title>A phylogeny of the extant Phocidae inferred from complete mitochondrial DNA coding regions.</title>
        <authorList>
            <person name="Davis C.S."/>
            <person name="Delisle I."/>
            <person name="Stirling I."/>
            <person name="Siniff D.B."/>
            <person name="Strobeck C."/>
        </authorList>
    </citation>
    <scope>NUCLEOTIDE SEQUENCE [GENOMIC DNA]</scope>
    <source>
        <strain>Isolate 96.6</strain>
        <strain>Isolate W12156</strain>
    </source>
</reference>
<reference key="2">
    <citation type="journal article" date="2006" name="Mol. Phylogenet. Evol.">
        <title>Pinniped phylogeny and a new hypothesis for their origin and dispersal.</title>
        <authorList>
            <person name="Arnason U."/>
            <person name="Gullberg A."/>
            <person name="Janke A."/>
            <person name="Kullberg M."/>
            <person name="Lehman N."/>
            <person name="Petrov E.A."/>
            <person name="Vainola R."/>
        </authorList>
    </citation>
    <scope>NUCLEOTIDE SEQUENCE [GENOMIC DNA]</scope>
</reference>
<name>NU4LM_LEPWE</name>
<evidence type="ECO:0000250" key="1">
    <source>
        <dbReference type="UniProtKB" id="P03901"/>
    </source>
</evidence>
<evidence type="ECO:0000250" key="2">
    <source>
        <dbReference type="UniProtKB" id="P03902"/>
    </source>
</evidence>
<evidence type="ECO:0000255" key="3"/>
<evidence type="ECO:0000305" key="4"/>
<feature type="chain" id="PRO_0000275042" description="NADH-ubiquinone oxidoreductase chain 4L">
    <location>
        <begin position="1"/>
        <end position="98"/>
    </location>
</feature>
<feature type="transmembrane region" description="Helical" evidence="3">
    <location>
        <begin position="1"/>
        <end position="21"/>
    </location>
</feature>
<feature type="transmembrane region" description="Helical" evidence="3">
    <location>
        <begin position="29"/>
        <end position="49"/>
    </location>
</feature>
<feature type="transmembrane region" description="Helical" evidence="3">
    <location>
        <begin position="61"/>
        <end position="81"/>
    </location>
</feature>
<keyword id="KW-0249">Electron transport</keyword>
<keyword id="KW-0472">Membrane</keyword>
<keyword id="KW-0496">Mitochondrion</keyword>
<keyword id="KW-0999">Mitochondrion inner membrane</keyword>
<keyword id="KW-0520">NAD</keyword>
<keyword id="KW-1185">Reference proteome</keyword>
<keyword id="KW-0679">Respiratory chain</keyword>
<keyword id="KW-1278">Translocase</keyword>
<keyword id="KW-0812">Transmembrane</keyword>
<keyword id="KW-1133">Transmembrane helix</keyword>
<keyword id="KW-0813">Transport</keyword>
<keyword id="KW-0830">Ubiquinone</keyword>
<proteinExistence type="inferred from homology"/>
<gene>
    <name type="primary">MT-ND4L</name>
    <name type="synonym">MTND4L</name>
    <name type="synonym">NADH4L</name>
    <name type="synonym">ND4L</name>
</gene>
<sequence>MTMVYANIFLAFITSLMGLLMYRSHLMSSLLCLEGMMLSLFVMMTVTILNNHFTLASMTPIILLVFAACEAALGLSLLVMVSNTYGTDYVQNLNLLQC</sequence>
<protein>
    <recommendedName>
        <fullName>NADH-ubiquinone oxidoreductase chain 4L</fullName>
        <ecNumber>7.1.1.2</ecNumber>
    </recommendedName>
    <alternativeName>
        <fullName>NADH dehydrogenase subunit 4L</fullName>
    </alternativeName>
</protein>
<comment type="function">
    <text evidence="1">Core subunit of the mitochondrial membrane respiratory chain NADH dehydrogenase (Complex I) which catalyzes electron transfer from NADH through the respiratory chain, using ubiquinone as an electron acceptor. Part of the enzyme membrane arm which is embedded in the lipid bilayer and involved in proton translocation.</text>
</comment>
<comment type="catalytic activity">
    <reaction evidence="1">
        <text>a ubiquinone + NADH + 5 H(+)(in) = a ubiquinol + NAD(+) + 4 H(+)(out)</text>
        <dbReference type="Rhea" id="RHEA:29091"/>
        <dbReference type="Rhea" id="RHEA-COMP:9565"/>
        <dbReference type="Rhea" id="RHEA-COMP:9566"/>
        <dbReference type="ChEBI" id="CHEBI:15378"/>
        <dbReference type="ChEBI" id="CHEBI:16389"/>
        <dbReference type="ChEBI" id="CHEBI:17976"/>
        <dbReference type="ChEBI" id="CHEBI:57540"/>
        <dbReference type="ChEBI" id="CHEBI:57945"/>
        <dbReference type="EC" id="7.1.1.2"/>
    </reaction>
    <physiologicalReaction direction="left-to-right" evidence="1">
        <dbReference type="Rhea" id="RHEA:29092"/>
    </physiologicalReaction>
</comment>
<comment type="subunit">
    <text evidence="2">Core subunit of respiratory chain NADH dehydrogenase (Complex I) which is composed of 45 different subunits.</text>
</comment>
<comment type="subcellular location">
    <subcellularLocation>
        <location evidence="2">Mitochondrion inner membrane</location>
        <topology evidence="3">Multi-pass membrane protein</topology>
    </subcellularLocation>
</comment>
<comment type="similarity">
    <text evidence="4">Belongs to the complex I subunit 4L family.</text>
</comment>